<reference key="1">
    <citation type="journal article" date="1994" name="Nucleic Acids Res.">
        <title>Systematic sequencing of the Escherichia coli genome: analysis of the 2.4-4.1 min (110,917-193,643 bp) region.</title>
        <authorList>
            <person name="Fujita N."/>
            <person name="Mori H."/>
            <person name="Yura T."/>
            <person name="Ishihama A."/>
        </authorList>
    </citation>
    <scope>NUCLEOTIDE SEQUENCE [LARGE SCALE GENOMIC DNA]</scope>
    <source>
        <strain>K12 / W3110 / ATCC 27325 / DSM 5911</strain>
    </source>
</reference>
<reference key="2">
    <citation type="submission" date="1997-01" db="EMBL/GenBank/DDBJ databases">
        <title>Sequence of minutes 4-25 of Escherichia coli.</title>
        <authorList>
            <person name="Chung E."/>
            <person name="Allen E."/>
            <person name="Araujo R."/>
            <person name="Aparicio A.M."/>
            <person name="Davis K."/>
            <person name="Duncan M."/>
            <person name="Federspiel N."/>
            <person name="Hyman R."/>
            <person name="Kalman S."/>
            <person name="Komp C."/>
            <person name="Kurdi O."/>
            <person name="Lew H."/>
            <person name="Lin D."/>
            <person name="Namath A."/>
            <person name="Oefner P."/>
            <person name="Roberts D."/>
            <person name="Schramm S."/>
            <person name="Davis R.W."/>
        </authorList>
    </citation>
    <scope>NUCLEOTIDE SEQUENCE [LARGE SCALE GENOMIC DNA]</scope>
    <source>
        <strain>K12 / MG1655 / ATCC 47076</strain>
    </source>
</reference>
<reference key="3">
    <citation type="journal article" date="1997" name="Science">
        <title>The complete genome sequence of Escherichia coli K-12.</title>
        <authorList>
            <person name="Blattner F.R."/>
            <person name="Plunkett G. III"/>
            <person name="Bloch C.A."/>
            <person name="Perna N.T."/>
            <person name="Burland V."/>
            <person name="Riley M."/>
            <person name="Collado-Vides J."/>
            <person name="Glasner J.D."/>
            <person name="Rode C.K."/>
            <person name="Mayhew G.F."/>
            <person name="Gregor J."/>
            <person name="Davis N.W."/>
            <person name="Kirkpatrick H.A."/>
            <person name="Goeden M.A."/>
            <person name="Rose D.J."/>
            <person name="Mau B."/>
            <person name="Shao Y."/>
        </authorList>
    </citation>
    <scope>NUCLEOTIDE SEQUENCE [LARGE SCALE GENOMIC DNA]</scope>
    <source>
        <strain>K12 / MG1655 / ATCC 47076</strain>
    </source>
</reference>
<reference key="4">
    <citation type="journal article" date="2006" name="Mol. Syst. Biol.">
        <title>Highly accurate genome sequences of Escherichia coli K-12 strains MG1655 and W3110.</title>
        <authorList>
            <person name="Hayashi K."/>
            <person name="Morooka N."/>
            <person name="Yamamoto Y."/>
            <person name="Fujita K."/>
            <person name="Isono K."/>
            <person name="Choi S."/>
            <person name="Ohtsubo E."/>
            <person name="Baba T."/>
            <person name="Wanner B.L."/>
            <person name="Mori H."/>
            <person name="Horiuchi T."/>
        </authorList>
    </citation>
    <scope>NUCLEOTIDE SEQUENCE [LARGE SCALE GENOMIC DNA]</scope>
    <source>
        <strain>K12 / W3110 / ATCC 27325 / DSM 5911</strain>
    </source>
</reference>
<proteinExistence type="inferred from homology"/>
<keyword id="KW-1185">Reference proteome</keyword>
<accession>P62768</accession>
<accession>P37048</accession>
<name>YAEH_ECOLI</name>
<evidence type="ECO:0000255" key="1">
    <source>
        <dbReference type="HAMAP-Rule" id="MF_01519"/>
    </source>
</evidence>
<feature type="chain" id="PRO_0000211835" description="UPF0325 protein YaeH">
    <location>
        <begin position="1"/>
        <end position="128"/>
    </location>
</feature>
<gene>
    <name evidence="1" type="primary">yaeH</name>
    <name type="ordered locus">b0163</name>
    <name type="ordered locus">JW0159</name>
</gene>
<protein>
    <recommendedName>
        <fullName evidence="1">UPF0325 protein YaeH</fullName>
    </recommendedName>
</protein>
<dbReference type="EMBL" id="U70214">
    <property type="protein sequence ID" value="AAB08593.1"/>
    <property type="molecule type" value="Genomic_DNA"/>
</dbReference>
<dbReference type="EMBL" id="U00096">
    <property type="protein sequence ID" value="AAC73274.1"/>
    <property type="molecule type" value="Genomic_DNA"/>
</dbReference>
<dbReference type="EMBL" id="AP009048">
    <property type="protein sequence ID" value="BAB96740.1"/>
    <property type="molecule type" value="Genomic_DNA"/>
</dbReference>
<dbReference type="PIR" id="S45230">
    <property type="entry name" value="S45230"/>
</dbReference>
<dbReference type="RefSeq" id="NP_414705.1">
    <property type="nucleotide sequence ID" value="NC_000913.3"/>
</dbReference>
<dbReference type="RefSeq" id="WP_000272188.1">
    <property type="nucleotide sequence ID" value="NZ_STEB01000032.1"/>
</dbReference>
<dbReference type="SMR" id="P62768"/>
<dbReference type="BioGRID" id="4261337">
    <property type="interactions" value="12"/>
</dbReference>
<dbReference type="DIP" id="DIP-48129N"/>
<dbReference type="FunCoup" id="P62768">
    <property type="interactions" value="48"/>
</dbReference>
<dbReference type="IntAct" id="P62768">
    <property type="interactions" value="3"/>
</dbReference>
<dbReference type="STRING" id="511145.b0163"/>
<dbReference type="jPOST" id="P62768"/>
<dbReference type="PaxDb" id="511145-b0163"/>
<dbReference type="EnsemblBacteria" id="AAC73274">
    <property type="protein sequence ID" value="AAC73274"/>
    <property type="gene ID" value="b0163"/>
</dbReference>
<dbReference type="GeneID" id="947044"/>
<dbReference type="KEGG" id="ecj:JW0159"/>
<dbReference type="KEGG" id="eco:b0163"/>
<dbReference type="KEGG" id="ecoc:C3026_00745"/>
<dbReference type="PATRIC" id="fig|511145.12.peg.169"/>
<dbReference type="EchoBASE" id="EB2240"/>
<dbReference type="eggNOG" id="ENOG502ZBV4">
    <property type="taxonomic scope" value="Bacteria"/>
</dbReference>
<dbReference type="HOGENOM" id="CLU_136774_0_0_6"/>
<dbReference type="InParanoid" id="P62768"/>
<dbReference type="OMA" id="QLCQRDQ"/>
<dbReference type="OrthoDB" id="5624524at2"/>
<dbReference type="PhylomeDB" id="P62768"/>
<dbReference type="BioCyc" id="EcoCyc:EG12336-MONOMER"/>
<dbReference type="PRO" id="PR:P62768"/>
<dbReference type="Proteomes" id="UP000000625">
    <property type="component" value="Chromosome"/>
</dbReference>
<dbReference type="HAMAP" id="MF_01519">
    <property type="entry name" value="UPF0325"/>
    <property type="match status" value="1"/>
</dbReference>
<dbReference type="InterPro" id="IPR020911">
    <property type="entry name" value="UPF0325"/>
</dbReference>
<dbReference type="NCBIfam" id="NF010213">
    <property type="entry name" value="PRK13677.1"/>
    <property type="match status" value="1"/>
</dbReference>
<dbReference type="Pfam" id="PF11944">
    <property type="entry name" value="DUF3461"/>
    <property type="match status" value="1"/>
</dbReference>
<comment type="similarity">
    <text evidence="1">Belongs to the UPF0325 family.</text>
</comment>
<organism>
    <name type="scientific">Escherichia coli (strain K12)</name>
    <dbReference type="NCBI Taxonomy" id="83333"/>
    <lineage>
        <taxon>Bacteria</taxon>
        <taxon>Pseudomonadati</taxon>
        <taxon>Pseudomonadota</taxon>
        <taxon>Gammaproteobacteria</taxon>
        <taxon>Enterobacterales</taxon>
        <taxon>Enterobacteriaceae</taxon>
        <taxon>Escherichia</taxon>
    </lineage>
</organism>
<sequence>MYDNLKSLGITNPEEIDRYSLRQEANNDILKIYFQKDKGEFFAKSVKFKYPRQRKTVVADGVGQGYKEVQEISPNLRYIIDELDQICQRDRSEVDLKRKILDDLRHLESVVTNKISEIEADLEKLTRK</sequence>